<evidence type="ECO:0000255" key="1">
    <source>
        <dbReference type="HAMAP-Rule" id="MF_00817"/>
    </source>
</evidence>
<gene>
    <name evidence="1" type="primary">queF</name>
    <name type="ordered locus">YPK_1057</name>
</gene>
<feature type="chain" id="PRO_1000213089" description="NADPH-dependent 7-cyano-7-deazaguanine reductase">
    <location>
        <begin position="1"/>
        <end position="281"/>
    </location>
</feature>
<feature type="active site" description="Thioimide intermediate" evidence="1">
    <location>
        <position position="189"/>
    </location>
</feature>
<feature type="active site" description="Proton donor" evidence="1">
    <location>
        <position position="196"/>
    </location>
</feature>
<feature type="binding site" evidence="1">
    <location>
        <begin position="88"/>
        <end position="90"/>
    </location>
    <ligand>
        <name>substrate</name>
    </ligand>
</feature>
<feature type="binding site" evidence="1">
    <location>
        <begin position="90"/>
        <end position="91"/>
    </location>
    <ligand>
        <name>NADPH</name>
        <dbReference type="ChEBI" id="CHEBI:57783"/>
    </ligand>
</feature>
<feature type="binding site" evidence="1">
    <location>
        <begin position="228"/>
        <end position="229"/>
    </location>
    <ligand>
        <name>substrate</name>
    </ligand>
</feature>
<feature type="binding site" evidence="1">
    <location>
        <begin position="257"/>
        <end position="258"/>
    </location>
    <ligand>
        <name>NADPH</name>
        <dbReference type="ChEBI" id="CHEBI:57783"/>
    </ligand>
</feature>
<protein>
    <recommendedName>
        <fullName evidence="1">NADPH-dependent 7-cyano-7-deazaguanine reductase</fullName>
        <ecNumber evidence="1">1.7.1.13</ecNumber>
    </recommendedName>
    <alternativeName>
        <fullName evidence="1">7-cyano-7-carbaguanine reductase</fullName>
    </alternativeName>
    <alternativeName>
        <fullName evidence="1">NADPH-dependent nitrile oxidoreductase</fullName>
    </alternativeName>
    <alternativeName>
        <fullName evidence="1">PreQ(0) reductase</fullName>
    </alternativeName>
</protein>
<comment type="function">
    <text evidence="1">Catalyzes the NADPH-dependent reduction of 7-cyano-7-deazaguanine (preQ0) to 7-aminomethyl-7-deazaguanine (preQ1).</text>
</comment>
<comment type="catalytic activity">
    <reaction evidence="1">
        <text>7-aminomethyl-7-carbaguanine + 2 NADP(+) = 7-cyano-7-deazaguanine + 2 NADPH + 3 H(+)</text>
        <dbReference type="Rhea" id="RHEA:13409"/>
        <dbReference type="ChEBI" id="CHEBI:15378"/>
        <dbReference type="ChEBI" id="CHEBI:45075"/>
        <dbReference type="ChEBI" id="CHEBI:57783"/>
        <dbReference type="ChEBI" id="CHEBI:58349"/>
        <dbReference type="ChEBI" id="CHEBI:58703"/>
        <dbReference type="EC" id="1.7.1.13"/>
    </reaction>
</comment>
<comment type="pathway">
    <text evidence="1">tRNA modification; tRNA-queuosine biosynthesis.</text>
</comment>
<comment type="subunit">
    <text evidence="1">Homodimer.</text>
</comment>
<comment type="subcellular location">
    <subcellularLocation>
        <location evidence="1">Cytoplasm</location>
    </subcellularLocation>
</comment>
<comment type="similarity">
    <text evidence="1">Belongs to the GTP cyclohydrolase I family. QueF type 2 subfamily.</text>
</comment>
<organism>
    <name type="scientific">Yersinia pseudotuberculosis serotype O:3 (strain YPIII)</name>
    <dbReference type="NCBI Taxonomy" id="502800"/>
    <lineage>
        <taxon>Bacteria</taxon>
        <taxon>Pseudomonadati</taxon>
        <taxon>Pseudomonadota</taxon>
        <taxon>Gammaproteobacteria</taxon>
        <taxon>Enterobacterales</taxon>
        <taxon>Yersiniaceae</taxon>
        <taxon>Yersinia</taxon>
    </lineage>
</organism>
<accession>B1JQF1</accession>
<name>QUEF_YERPY</name>
<dbReference type="EC" id="1.7.1.13" evidence="1"/>
<dbReference type="EMBL" id="CP000950">
    <property type="protein sequence ID" value="ACA67358.1"/>
    <property type="molecule type" value="Genomic_DNA"/>
</dbReference>
<dbReference type="RefSeq" id="WP_002212122.1">
    <property type="nucleotide sequence ID" value="NZ_CP009792.1"/>
</dbReference>
<dbReference type="SMR" id="B1JQF1"/>
<dbReference type="GeneID" id="57977527"/>
<dbReference type="KEGG" id="ypy:YPK_1057"/>
<dbReference type="PATRIC" id="fig|502800.11.peg.1689"/>
<dbReference type="UniPathway" id="UPA00392"/>
<dbReference type="GO" id="GO:0005737">
    <property type="term" value="C:cytoplasm"/>
    <property type="evidence" value="ECO:0007669"/>
    <property type="project" value="UniProtKB-SubCell"/>
</dbReference>
<dbReference type="GO" id="GO:0033739">
    <property type="term" value="F:preQ1 synthase activity"/>
    <property type="evidence" value="ECO:0007669"/>
    <property type="project" value="UniProtKB-UniRule"/>
</dbReference>
<dbReference type="GO" id="GO:0008616">
    <property type="term" value="P:queuosine biosynthetic process"/>
    <property type="evidence" value="ECO:0007669"/>
    <property type="project" value="UniProtKB-UniRule"/>
</dbReference>
<dbReference type="GO" id="GO:0006400">
    <property type="term" value="P:tRNA modification"/>
    <property type="evidence" value="ECO:0007669"/>
    <property type="project" value="UniProtKB-UniRule"/>
</dbReference>
<dbReference type="Gene3D" id="3.30.1130.10">
    <property type="match status" value="2"/>
</dbReference>
<dbReference type="HAMAP" id="MF_00817">
    <property type="entry name" value="QueF_type2"/>
    <property type="match status" value="1"/>
</dbReference>
<dbReference type="InterPro" id="IPR043133">
    <property type="entry name" value="GTP-CH-I_C/QueF"/>
</dbReference>
<dbReference type="InterPro" id="IPR050084">
    <property type="entry name" value="NADPH_dep_7-cyano-7-deazaG_red"/>
</dbReference>
<dbReference type="InterPro" id="IPR029500">
    <property type="entry name" value="QueF"/>
</dbReference>
<dbReference type="InterPro" id="IPR029139">
    <property type="entry name" value="QueF_N"/>
</dbReference>
<dbReference type="InterPro" id="IPR016428">
    <property type="entry name" value="QueF_type2"/>
</dbReference>
<dbReference type="NCBIfam" id="TIGR03138">
    <property type="entry name" value="QueF"/>
    <property type="match status" value="1"/>
</dbReference>
<dbReference type="PANTHER" id="PTHR34354">
    <property type="entry name" value="NADPH-DEPENDENT 7-CYANO-7-DEAZAGUANINE REDUCTASE"/>
    <property type="match status" value="1"/>
</dbReference>
<dbReference type="PANTHER" id="PTHR34354:SF1">
    <property type="entry name" value="NADPH-DEPENDENT 7-CYANO-7-DEAZAGUANINE REDUCTASE"/>
    <property type="match status" value="1"/>
</dbReference>
<dbReference type="Pfam" id="PF14489">
    <property type="entry name" value="QueF"/>
    <property type="match status" value="1"/>
</dbReference>
<dbReference type="Pfam" id="PF14819">
    <property type="entry name" value="QueF_N"/>
    <property type="match status" value="1"/>
</dbReference>
<dbReference type="PIRSF" id="PIRSF004750">
    <property type="entry name" value="Nitrile_oxidored_YqcD_prd"/>
    <property type="match status" value="1"/>
</dbReference>
<dbReference type="SUPFAM" id="SSF55620">
    <property type="entry name" value="Tetrahydrobiopterin biosynthesis enzymes-like"/>
    <property type="match status" value="1"/>
</dbReference>
<sequence>MSSYQNHKALAELTLGKPTAYCDYYDATLLQAVPRSMNREPLGLYPDNLPFHGADIWTLYELSWLNSNGLPQVAVGEISLNADSINLIESKSFKLYLNSFNQTIFADKESVRMTLQRDLAACAQGNVSVALYDLDEITGQPISNFNGECLDKQDIRIDSYEFNADYLQGAAGKDHVEESLVSHLLKSNCLITHQPDWGSVQIHYRGPQIDHEALLRYLVSFRHHNEFHEQCVERIFNDIMRFCQPETLTVYARYTRRGGLDINPWRSNTDFVPLTGRLARQ</sequence>
<keyword id="KW-0963">Cytoplasm</keyword>
<keyword id="KW-0521">NADP</keyword>
<keyword id="KW-0560">Oxidoreductase</keyword>
<keyword id="KW-0671">Queuosine biosynthesis</keyword>
<reference key="1">
    <citation type="submission" date="2008-02" db="EMBL/GenBank/DDBJ databases">
        <title>Complete sequence of Yersinia pseudotuberculosis YPIII.</title>
        <authorList>
            <consortium name="US DOE Joint Genome Institute"/>
            <person name="Copeland A."/>
            <person name="Lucas S."/>
            <person name="Lapidus A."/>
            <person name="Glavina del Rio T."/>
            <person name="Dalin E."/>
            <person name="Tice H."/>
            <person name="Bruce D."/>
            <person name="Goodwin L."/>
            <person name="Pitluck S."/>
            <person name="Munk A.C."/>
            <person name="Brettin T."/>
            <person name="Detter J.C."/>
            <person name="Han C."/>
            <person name="Tapia R."/>
            <person name="Schmutz J."/>
            <person name="Larimer F."/>
            <person name="Land M."/>
            <person name="Hauser L."/>
            <person name="Challacombe J.F."/>
            <person name="Green L."/>
            <person name="Lindler L.E."/>
            <person name="Nikolich M.P."/>
            <person name="Richardson P."/>
        </authorList>
    </citation>
    <scope>NUCLEOTIDE SEQUENCE [LARGE SCALE GENOMIC DNA]</scope>
    <source>
        <strain>YPIII</strain>
    </source>
</reference>
<proteinExistence type="inferred from homology"/>